<gene>
    <name evidence="1" type="primary">acsF</name>
    <name type="ordered locus">P9211_09191</name>
</gene>
<dbReference type="EC" id="1.14.13.81" evidence="1"/>
<dbReference type="EMBL" id="CP000878">
    <property type="protein sequence ID" value="ABX08850.1"/>
    <property type="molecule type" value="Genomic_DNA"/>
</dbReference>
<dbReference type="RefSeq" id="WP_012195471.1">
    <property type="nucleotide sequence ID" value="NC_009976.1"/>
</dbReference>
<dbReference type="SMR" id="A9BAI8"/>
<dbReference type="STRING" id="93059.P9211_09191"/>
<dbReference type="KEGG" id="pmj:P9211_09191"/>
<dbReference type="eggNOG" id="COG1633">
    <property type="taxonomic scope" value="Bacteria"/>
</dbReference>
<dbReference type="HOGENOM" id="CLU_048037_0_0_3"/>
<dbReference type="OrthoDB" id="141643at2"/>
<dbReference type="UniPathway" id="UPA00670"/>
<dbReference type="Proteomes" id="UP000000788">
    <property type="component" value="Chromosome"/>
</dbReference>
<dbReference type="GO" id="GO:0005506">
    <property type="term" value="F:iron ion binding"/>
    <property type="evidence" value="ECO:0007669"/>
    <property type="project" value="UniProtKB-UniRule"/>
</dbReference>
<dbReference type="GO" id="GO:0048529">
    <property type="term" value="F:magnesium-protoporphyrin IX monomethyl ester (oxidative) cyclase activity"/>
    <property type="evidence" value="ECO:0007669"/>
    <property type="project" value="UniProtKB-UniRule"/>
</dbReference>
<dbReference type="GO" id="GO:0036068">
    <property type="term" value="P:light-independent chlorophyll biosynthetic process"/>
    <property type="evidence" value="ECO:0007669"/>
    <property type="project" value="UniProtKB-UniRule"/>
</dbReference>
<dbReference type="GO" id="GO:0015979">
    <property type="term" value="P:photosynthesis"/>
    <property type="evidence" value="ECO:0007669"/>
    <property type="project" value="UniProtKB-UniRule"/>
</dbReference>
<dbReference type="HAMAP" id="MF_01840">
    <property type="entry name" value="AcsF"/>
    <property type="match status" value="1"/>
</dbReference>
<dbReference type="InterPro" id="IPR008434">
    <property type="entry name" value="AcsF"/>
</dbReference>
<dbReference type="InterPro" id="IPR009078">
    <property type="entry name" value="Ferritin-like_SF"/>
</dbReference>
<dbReference type="InterPro" id="IPR003251">
    <property type="entry name" value="Rr_diiron-bd_dom"/>
</dbReference>
<dbReference type="NCBIfam" id="TIGR02029">
    <property type="entry name" value="AcsF"/>
    <property type="match status" value="1"/>
</dbReference>
<dbReference type="NCBIfam" id="NF010172">
    <property type="entry name" value="PRK13654.1"/>
    <property type="match status" value="1"/>
</dbReference>
<dbReference type="PANTHER" id="PTHR31053">
    <property type="entry name" value="MAGNESIUM-PROTOPORPHYRIN IX MONOMETHYL ESTER [OXIDATIVE] CYCLASE, CHLOROPLASTIC"/>
    <property type="match status" value="1"/>
</dbReference>
<dbReference type="PANTHER" id="PTHR31053:SF2">
    <property type="entry name" value="MAGNESIUM-PROTOPORPHYRIN IX MONOMETHYL ESTER [OXIDATIVE] CYCLASE, CHLOROPLASTIC"/>
    <property type="match status" value="1"/>
</dbReference>
<dbReference type="Pfam" id="PF02915">
    <property type="entry name" value="Rubrerythrin"/>
    <property type="match status" value="1"/>
</dbReference>
<dbReference type="SUPFAM" id="SSF47240">
    <property type="entry name" value="Ferritin-like"/>
    <property type="match status" value="1"/>
</dbReference>
<keyword id="KW-0149">Chlorophyll biosynthesis</keyword>
<keyword id="KW-0408">Iron</keyword>
<keyword id="KW-0479">Metal-binding</keyword>
<keyword id="KW-0521">NADP</keyword>
<keyword id="KW-0560">Oxidoreductase</keyword>
<keyword id="KW-0602">Photosynthesis</keyword>
<keyword id="KW-1185">Reference proteome</keyword>
<protein>
    <recommendedName>
        <fullName evidence="1">Magnesium-protoporphyrin IX monomethyl ester [oxidative] cyclase</fullName>
        <shortName evidence="1">Mg-protoporphyrin IX monomethyl ester oxidative cyclase</shortName>
        <ecNumber evidence="1">1.14.13.81</ecNumber>
    </recommendedName>
</protein>
<proteinExistence type="inferred from homology"/>
<evidence type="ECO:0000255" key="1">
    <source>
        <dbReference type="HAMAP-Rule" id="MF_01840"/>
    </source>
</evidence>
<evidence type="ECO:0000256" key="2">
    <source>
        <dbReference type="SAM" id="MobiDB-lite"/>
    </source>
</evidence>
<name>ACSF_PROM4</name>
<comment type="function">
    <text evidence="1">Catalyzes the formation of the isocyclic ring in chlorophyll biosynthesis. Mediates the cyclase reaction, which results in the formation of divinylprotochlorophyllide (Pchlide) characteristic of all chlorophylls from magnesium-protoporphyrin IX 13-monomethyl ester (MgPMME).</text>
</comment>
<comment type="catalytic activity">
    <reaction evidence="1">
        <text>Mg-protoporphyrin IX 13-monomethyl ester + 3 NADPH + 3 O2 + 2 H(+) = 3,8-divinyl protochlorophyllide a + 3 NADP(+) + 5 H2O</text>
        <dbReference type="Rhea" id="RHEA:33235"/>
        <dbReference type="ChEBI" id="CHEBI:15377"/>
        <dbReference type="ChEBI" id="CHEBI:15378"/>
        <dbReference type="ChEBI" id="CHEBI:15379"/>
        <dbReference type="ChEBI" id="CHEBI:57783"/>
        <dbReference type="ChEBI" id="CHEBI:58349"/>
        <dbReference type="ChEBI" id="CHEBI:58632"/>
        <dbReference type="ChEBI" id="CHEBI:60491"/>
        <dbReference type="EC" id="1.14.13.81"/>
    </reaction>
</comment>
<comment type="cofactor">
    <cofactor evidence="1">
        <name>Fe cation</name>
        <dbReference type="ChEBI" id="CHEBI:24875"/>
    </cofactor>
</comment>
<comment type="pathway">
    <text evidence="1">Porphyrin-containing compound metabolism; chlorophyll biosynthesis (light-independent).</text>
</comment>
<comment type="similarity">
    <text evidence="1">Belongs to the AcsF family.</text>
</comment>
<reference key="1">
    <citation type="journal article" date="2007" name="PLoS Genet.">
        <title>Patterns and implications of gene gain and loss in the evolution of Prochlorococcus.</title>
        <authorList>
            <person name="Kettler G.C."/>
            <person name="Martiny A.C."/>
            <person name="Huang K."/>
            <person name="Zucker J."/>
            <person name="Coleman M.L."/>
            <person name="Rodrigue S."/>
            <person name="Chen F."/>
            <person name="Lapidus A."/>
            <person name="Ferriera S."/>
            <person name="Johnson J."/>
            <person name="Steglich C."/>
            <person name="Church G.M."/>
            <person name="Richardson P."/>
            <person name="Chisholm S.W."/>
        </authorList>
    </citation>
    <scope>NUCLEOTIDE SEQUENCE [LARGE SCALE GENOMIC DNA]</scope>
    <source>
        <strain>MIT 9211</strain>
    </source>
</reference>
<organism>
    <name type="scientific">Prochlorococcus marinus (strain MIT 9211)</name>
    <dbReference type="NCBI Taxonomy" id="93059"/>
    <lineage>
        <taxon>Bacteria</taxon>
        <taxon>Bacillati</taxon>
        <taxon>Cyanobacteriota</taxon>
        <taxon>Cyanophyceae</taxon>
        <taxon>Synechococcales</taxon>
        <taxon>Prochlorococcaceae</taxon>
        <taxon>Prochlorococcus</taxon>
    </lineage>
</organism>
<accession>A9BAI8</accession>
<sequence>MTATASASSVSGSLGRNELPPHLDENLLTPRFYTTEFDKAAKTDLEIARRDFQAMFNEMEADYNLKHFDRKASLARLNELSPKDKSVYESYLVRSVVSEFSGFLLFKEISNRFKKAKRPELGQFFQFLARDEARHAGFLGRALKEEGINIDLPNLPKKRAATFFPLSWVLYSLYLSEKIGYWRYILINRHLKAHPDKACAPLFDFFEPWCQDENRHGDCINMMMRCWPGMTKGFRGKILSRFFLWTVFLTHTLTVCERGDFYELLAIDPVKFDEEVIIQTNNTSKNAFPWVYNFEDGRFLEMRKEILNAFRSWRKASKLSKPIHFLKFVSLIARQFALPMEKTQAVRYS</sequence>
<feature type="chain" id="PRO_1000188412" description="Magnesium-protoporphyrin IX monomethyl ester [oxidative] cyclase">
    <location>
        <begin position="1"/>
        <end position="349"/>
    </location>
</feature>
<feature type="region of interest" description="Disordered" evidence="2">
    <location>
        <begin position="1"/>
        <end position="22"/>
    </location>
</feature>